<reference key="1">
    <citation type="online journal article" date="1996" name="Plant Gene Register">
        <title>Sequence of a new p40-like protein cDNA from Arabidopsis.</title>
        <authorList>
            <person name="Staswick P.E."/>
            <person name="Garcia-Hernandez M."/>
        </authorList>
        <locator>PGR96-070</locator>
    </citation>
    <scope>NUCLEOTIDE SEQUENCE [MRNA] (ISOFORM 1)</scope>
    <source>
        <strain>cv. Columbia</strain>
        <tissue>Leaf</tissue>
    </source>
</reference>
<reference key="2">
    <citation type="journal article" date="2000" name="Nature">
        <title>Sequence and analysis of chromosome 3 of the plant Arabidopsis thaliana.</title>
        <authorList>
            <person name="Salanoubat M."/>
            <person name="Lemcke K."/>
            <person name="Rieger M."/>
            <person name="Ansorge W."/>
            <person name="Unseld M."/>
            <person name="Fartmann B."/>
            <person name="Valle G."/>
            <person name="Bloecker H."/>
            <person name="Perez-Alonso M."/>
            <person name="Obermaier B."/>
            <person name="Delseny M."/>
            <person name="Boutry M."/>
            <person name="Grivell L.A."/>
            <person name="Mache R."/>
            <person name="Puigdomenech P."/>
            <person name="De Simone V."/>
            <person name="Choisne N."/>
            <person name="Artiguenave F."/>
            <person name="Robert C."/>
            <person name="Brottier P."/>
            <person name="Wincker P."/>
            <person name="Cattolico L."/>
            <person name="Weissenbach J."/>
            <person name="Saurin W."/>
            <person name="Quetier F."/>
            <person name="Schaefer M."/>
            <person name="Mueller-Auer S."/>
            <person name="Gabel C."/>
            <person name="Fuchs M."/>
            <person name="Benes V."/>
            <person name="Wurmbach E."/>
            <person name="Drzonek H."/>
            <person name="Erfle H."/>
            <person name="Jordan N."/>
            <person name="Bangert S."/>
            <person name="Wiedelmann R."/>
            <person name="Kranz H."/>
            <person name="Voss H."/>
            <person name="Holland R."/>
            <person name="Brandt P."/>
            <person name="Nyakatura G."/>
            <person name="Vezzi A."/>
            <person name="D'Angelo M."/>
            <person name="Pallavicini A."/>
            <person name="Toppo S."/>
            <person name="Simionati B."/>
            <person name="Conrad A."/>
            <person name="Hornischer K."/>
            <person name="Kauer G."/>
            <person name="Loehnert T.-H."/>
            <person name="Nordsiek G."/>
            <person name="Reichelt J."/>
            <person name="Scharfe M."/>
            <person name="Schoen O."/>
            <person name="Bargues M."/>
            <person name="Terol J."/>
            <person name="Climent J."/>
            <person name="Navarro P."/>
            <person name="Collado C."/>
            <person name="Perez-Perez A."/>
            <person name="Ottenwaelder B."/>
            <person name="Duchemin D."/>
            <person name="Cooke R."/>
            <person name="Laudie M."/>
            <person name="Berger-Llauro C."/>
            <person name="Purnelle B."/>
            <person name="Masuy D."/>
            <person name="de Haan M."/>
            <person name="Maarse A.C."/>
            <person name="Alcaraz J.-P."/>
            <person name="Cottet A."/>
            <person name="Casacuberta E."/>
            <person name="Monfort A."/>
            <person name="Argiriou A."/>
            <person name="Flores M."/>
            <person name="Liguori R."/>
            <person name="Vitale D."/>
            <person name="Mannhaupt G."/>
            <person name="Haase D."/>
            <person name="Schoof H."/>
            <person name="Rudd S."/>
            <person name="Zaccaria P."/>
            <person name="Mewes H.-W."/>
            <person name="Mayer K.F.X."/>
            <person name="Kaul S."/>
            <person name="Town C.D."/>
            <person name="Koo H.L."/>
            <person name="Tallon L.J."/>
            <person name="Jenkins J."/>
            <person name="Rooney T."/>
            <person name="Rizzo M."/>
            <person name="Walts A."/>
            <person name="Utterback T."/>
            <person name="Fujii C.Y."/>
            <person name="Shea T.P."/>
            <person name="Creasy T.H."/>
            <person name="Haas B."/>
            <person name="Maiti R."/>
            <person name="Wu D."/>
            <person name="Peterson J."/>
            <person name="Van Aken S."/>
            <person name="Pai G."/>
            <person name="Militscher J."/>
            <person name="Sellers P."/>
            <person name="Gill J.E."/>
            <person name="Feldblyum T.V."/>
            <person name="Preuss D."/>
            <person name="Lin X."/>
            <person name="Nierman W.C."/>
            <person name="Salzberg S.L."/>
            <person name="White O."/>
            <person name="Venter J.C."/>
            <person name="Fraser C.M."/>
            <person name="Kaneko T."/>
            <person name="Nakamura Y."/>
            <person name="Sato S."/>
            <person name="Kato T."/>
            <person name="Asamizu E."/>
            <person name="Sasamoto S."/>
            <person name="Kimura T."/>
            <person name="Idesawa K."/>
            <person name="Kawashima K."/>
            <person name="Kishida Y."/>
            <person name="Kiyokawa C."/>
            <person name="Kohara M."/>
            <person name="Matsumoto M."/>
            <person name="Matsuno A."/>
            <person name="Muraki A."/>
            <person name="Nakayama S."/>
            <person name="Nakazaki N."/>
            <person name="Shinpo S."/>
            <person name="Takeuchi C."/>
            <person name="Wada T."/>
            <person name="Watanabe A."/>
            <person name="Yamada M."/>
            <person name="Yasuda M."/>
            <person name="Tabata S."/>
        </authorList>
    </citation>
    <scope>NUCLEOTIDE SEQUENCE [LARGE SCALE GENOMIC DNA]</scope>
    <source>
        <strain>cv. Columbia</strain>
    </source>
</reference>
<reference key="3">
    <citation type="journal article" date="2017" name="Plant J.">
        <title>Araport11: a complete reannotation of the Arabidopsis thaliana reference genome.</title>
        <authorList>
            <person name="Cheng C.Y."/>
            <person name="Krishnakumar V."/>
            <person name="Chan A.P."/>
            <person name="Thibaud-Nissen F."/>
            <person name="Schobel S."/>
            <person name="Town C.D."/>
        </authorList>
    </citation>
    <scope>GENOME REANNOTATION</scope>
    <source>
        <strain>cv. Columbia</strain>
    </source>
</reference>
<reference key="4">
    <citation type="journal article" date="2003" name="Science">
        <title>Empirical analysis of transcriptional activity in the Arabidopsis genome.</title>
        <authorList>
            <person name="Yamada K."/>
            <person name="Lim J."/>
            <person name="Dale J.M."/>
            <person name="Chen H."/>
            <person name="Shinn P."/>
            <person name="Palm C.J."/>
            <person name="Southwick A.M."/>
            <person name="Wu H.C."/>
            <person name="Kim C.J."/>
            <person name="Nguyen M."/>
            <person name="Pham P.K."/>
            <person name="Cheuk R.F."/>
            <person name="Karlin-Newmann G."/>
            <person name="Liu S.X."/>
            <person name="Lam B."/>
            <person name="Sakano H."/>
            <person name="Wu T."/>
            <person name="Yu G."/>
            <person name="Miranda M."/>
            <person name="Quach H.L."/>
            <person name="Tripp M."/>
            <person name="Chang C.H."/>
            <person name="Lee J.M."/>
            <person name="Toriumi M.J."/>
            <person name="Chan M.M."/>
            <person name="Tang C.C."/>
            <person name="Onodera C.S."/>
            <person name="Deng J.M."/>
            <person name="Akiyama K."/>
            <person name="Ansari Y."/>
            <person name="Arakawa T."/>
            <person name="Banh J."/>
            <person name="Banno F."/>
            <person name="Bowser L."/>
            <person name="Brooks S.Y."/>
            <person name="Carninci P."/>
            <person name="Chao Q."/>
            <person name="Choy N."/>
            <person name="Enju A."/>
            <person name="Goldsmith A.D."/>
            <person name="Gurjal M."/>
            <person name="Hansen N.F."/>
            <person name="Hayashizaki Y."/>
            <person name="Johnson-Hopson C."/>
            <person name="Hsuan V.W."/>
            <person name="Iida K."/>
            <person name="Karnes M."/>
            <person name="Khan S."/>
            <person name="Koesema E."/>
            <person name="Ishida J."/>
            <person name="Jiang P.X."/>
            <person name="Jones T."/>
            <person name="Kawai J."/>
            <person name="Kamiya A."/>
            <person name="Meyers C."/>
            <person name="Nakajima M."/>
            <person name="Narusaka M."/>
            <person name="Seki M."/>
            <person name="Sakurai T."/>
            <person name="Satou M."/>
            <person name="Tamse R."/>
            <person name="Vaysberg M."/>
            <person name="Wallender E.K."/>
            <person name="Wong C."/>
            <person name="Yamamura Y."/>
            <person name="Yuan S."/>
            <person name="Shinozaki K."/>
            <person name="Davis R.W."/>
            <person name="Theologis A."/>
            <person name="Ecker J.R."/>
        </authorList>
    </citation>
    <scope>NUCLEOTIDE SEQUENCE [LARGE SCALE MRNA] (ISOFORM 2)</scope>
    <source>
        <strain>cv. Columbia</strain>
    </source>
</reference>
<reference key="5">
    <citation type="submission" date="2002-03" db="EMBL/GenBank/DDBJ databases">
        <title>Full-length cDNA from Arabidopsis thaliana.</title>
        <authorList>
            <person name="Brover V.V."/>
            <person name="Troukhan M.E."/>
            <person name="Alexandrov N.A."/>
            <person name="Lu Y.-P."/>
            <person name="Flavell R.B."/>
            <person name="Feldmann K.A."/>
        </authorList>
    </citation>
    <scope>NUCLEOTIDE SEQUENCE [LARGE SCALE MRNA] (ISOFORM 1)</scope>
</reference>
<reference key="6">
    <citation type="journal article" date="2001" name="Plant Physiol.">
        <title>The organization of cytoplasmic ribosomal protein genes in the Arabidopsis genome.</title>
        <authorList>
            <person name="Barakat A."/>
            <person name="Szick-Miranda K."/>
            <person name="Chang I.-F."/>
            <person name="Guyot R."/>
            <person name="Blanc G."/>
            <person name="Cooke R."/>
            <person name="Delseny M."/>
            <person name="Bailey-Serres J."/>
        </authorList>
    </citation>
    <scope>GENE FAMILY ORGANIZATION</scope>
    <scope>NOMENCLATURE</scope>
</reference>
<reference key="7">
    <citation type="journal article" date="2012" name="Mol. Cell. Proteomics">
        <title>Comparative large-scale characterisation of plant vs. mammal proteins reveals similar and idiosyncratic N-alpha acetylation features.</title>
        <authorList>
            <person name="Bienvenut W.V."/>
            <person name="Sumpton D."/>
            <person name="Martinez A."/>
            <person name="Lilla S."/>
            <person name="Espagne C."/>
            <person name="Meinnel T."/>
            <person name="Giglione C."/>
        </authorList>
    </citation>
    <scope>ACETYLATION [LARGE SCALE ANALYSIS] AT ALA-2</scope>
    <scope>CLEAVAGE OF INITIATOR METHIONINE [LARGE SCALE ANALYSIS]</scope>
    <scope>IDENTIFICATION BY MASS SPECTROMETRY [LARGE SCALE ANALYSIS]</scope>
</reference>
<reference key="8">
    <citation type="journal article" date="2023" name="Plant Cell">
        <title>An updated nomenclature for plant ribosomal protein genes.</title>
        <authorList>
            <person name="Scarpin M.R."/>
            <person name="Busche M."/>
            <person name="Martinez R.E."/>
            <person name="Harper L.C."/>
            <person name="Reiser L."/>
            <person name="Szakonyi D."/>
            <person name="Merchante C."/>
            <person name="Lan T."/>
            <person name="Xiong W."/>
            <person name="Mo B."/>
            <person name="Tang G."/>
            <person name="Chen X."/>
            <person name="Bailey-Serres J."/>
            <person name="Browning K.S."/>
            <person name="Brunkard J.O."/>
        </authorList>
    </citation>
    <scope>NOMENCLATURE</scope>
</reference>
<gene>
    <name type="primary">RPSaB</name>
    <name type="ordered locus">At3g04770</name>
    <name type="ORF">F7O18.26</name>
</gene>
<proteinExistence type="evidence at protein level"/>
<evidence type="ECO:0000255" key="1">
    <source>
        <dbReference type="HAMAP-Rule" id="MF_03015"/>
    </source>
</evidence>
<evidence type="ECO:0000303" key="2">
    <source>
    </source>
</evidence>
<evidence type="ECO:0000303" key="3">
    <source>
    </source>
</evidence>
<evidence type="ECO:0000305" key="4"/>
<evidence type="ECO:0007744" key="5">
    <source>
    </source>
</evidence>
<comment type="function">
    <text evidence="1">Required for the assembly and/or stability of the 40S ribosomal subunit. Required for the processing of the 20S rRNA-precursor to mature 18S rRNA in a late step of the maturation of 40S ribosomal subunits.</text>
</comment>
<comment type="subunit">
    <text evidence="1">Component of the small ribosomal subunit. Mature ribosomes consist of a small (40S) and a large (60S) subunit. The 40S subunit contains about 33 different proteins and 1 molecule of RNA (18S). The 60S subunit contains about 49 different proteins and 3 molecules of RNA (25S, 5.8S and 5S). Interacts with ribosomal protein S21.</text>
</comment>
<comment type="subcellular location">
    <subcellularLocation>
        <location>Cytoplasm</location>
    </subcellularLocation>
</comment>
<comment type="alternative products">
    <event type="alternative splicing"/>
    <isoform>
        <id>Q8H173-1</id>
        <name>1</name>
        <sequence type="displayed"/>
    </isoform>
    <isoform>
        <id>Q8H173-2</id>
        <name>2</name>
        <sequence type="described" ref="VSP_015273"/>
    </isoform>
</comment>
<comment type="miscellaneous">
    <molecule>Isoform 2</molecule>
    <text evidence="4">May be due to an intron retention.</text>
</comment>
<comment type="similarity">
    <text evidence="1">Belongs to the universal ribosomal protein uS2 family.</text>
</comment>
<keyword id="KW-0007">Acetylation</keyword>
<keyword id="KW-0025">Alternative splicing</keyword>
<keyword id="KW-0963">Cytoplasm</keyword>
<keyword id="KW-1185">Reference proteome</keyword>
<keyword id="KW-0687">Ribonucleoprotein</keyword>
<keyword id="KW-0689">Ribosomal protein</keyword>
<protein>
    <recommendedName>
        <fullName evidence="3">Small ribosomal subunit protein uS2y</fullName>
    </recommendedName>
    <alternativeName>
        <fullName>40S ribosomal protein Sa-2</fullName>
    </alternativeName>
    <alternativeName>
        <fullName>p40 protein homolog</fullName>
    </alternativeName>
</protein>
<dbReference type="EMBL" id="U66223">
    <property type="protein sequence ID" value="AAB67866.1"/>
    <property type="molecule type" value="mRNA"/>
</dbReference>
<dbReference type="EMBL" id="AC011437">
    <property type="protein sequence ID" value="AAF04903.1"/>
    <property type="molecule type" value="Genomic_DNA"/>
</dbReference>
<dbReference type="EMBL" id="CP002686">
    <property type="protein sequence ID" value="AEE74134.1"/>
    <property type="molecule type" value="Genomic_DNA"/>
</dbReference>
<dbReference type="EMBL" id="AY075693">
    <property type="protein sequence ID" value="AAL77699.1"/>
    <property type="molecule type" value="mRNA"/>
</dbReference>
<dbReference type="EMBL" id="BT000551">
    <property type="protein sequence ID" value="AAN18120.1"/>
    <property type="molecule type" value="mRNA"/>
</dbReference>
<dbReference type="EMBL" id="AY087423">
    <property type="protein sequence ID" value="AAM64971.1"/>
    <property type="molecule type" value="mRNA"/>
</dbReference>
<dbReference type="RefSeq" id="NP_187128.1">
    <molecule id="Q8H173-1"/>
    <property type="nucleotide sequence ID" value="NM_111349.4"/>
</dbReference>
<dbReference type="SMR" id="Q8H173"/>
<dbReference type="BioGRID" id="4972">
    <property type="interactions" value="2"/>
</dbReference>
<dbReference type="FunCoup" id="Q8H173">
    <property type="interactions" value="3138"/>
</dbReference>
<dbReference type="STRING" id="3702.Q8H173"/>
<dbReference type="iPTMnet" id="Q8H173"/>
<dbReference type="PaxDb" id="3702-AT3G04770.1"/>
<dbReference type="ProteomicsDB" id="228027">
    <molecule id="Q8H173-1"/>
</dbReference>
<dbReference type="DNASU" id="819637"/>
<dbReference type="EnsemblPlants" id="AT3G04770.2">
    <molecule id="Q8H173-1"/>
    <property type="protein sequence ID" value="AT3G04770.2"/>
    <property type="gene ID" value="AT3G04770"/>
</dbReference>
<dbReference type="GeneID" id="819637"/>
<dbReference type="Gramene" id="AT3G04770.2">
    <molecule id="Q8H173-1"/>
    <property type="protein sequence ID" value="AT3G04770.2"/>
    <property type="gene ID" value="AT3G04770"/>
</dbReference>
<dbReference type="KEGG" id="ath:AT3G04770"/>
<dbReference type="Araport" id="AT3G04770"/>
<dbReference type="TAIR" id="AT3G04770">
    <property type="gene designation" value="RPSAB"/>
</dbReference>
<dbReference type="eggNOG" id="KOG0830">
    <property type="taxonomic scope" value="Eukaryota"/>
</dbReference>
<dbReference type="HOGENOM" id="CLU_058171_0_0_1"/>
<dbReference type="InParanoid" id="Q8H173"/>
<dbReference type="OMA" id="DSANWNT"/>
<dbReference type="PhylomeDB" id="Q8H173"/>
<dbReference type="PRO" id="PR:Q8H173"/>
<dbReference type="Proteomes" id="UP000006548">
    <property type="component" value="Chromosome 3"/>
</dbReference>
<dbReference type="ExpressionAtlas" id="Q8H173">
    <property type="expression patterns" value="baseline and differential"/>
</dbReference>
<dbReference type="GO" id="GO:0022627">
    <property type="term" value="C:cytosolic small ribosomal subunit"/>
    <property type="evidence" value="ECO:0007669"/>
    <property type="project" value="UniProtKB-UniRule"/>
</dbReference>
<dbReference type="GO" id="GO:0003735">
    <property type="term" value="F:structural constituent of ribosome"/>
    <property type="evidence" value="ECO:0007669"/>
    <property type="project" value="UniProtKB-UniRule"/>
</dbReference>
<dbReference type="GO" id="GO:0000028">
    <property type="term" value="P:ribosomal small subunit assembly"/>
    <property type="evidence" value="ECO:0007669"/>
    <property type="project" value="UniProtKB-UniRule"/>
</dbReference>
<dbReference type="GO" id="GO:0006412">
    <property type="term" value="P:translation"/>
    <property type="evidence" value="ECO:0007669"/>
    <property type="project" value="UniProtKB-UniRule"/>
</dbReference>
<dbReference type="CDD" id="cd01425">
    <property type="entry name" value="RPS2"/>
    <property type="match status" value="1"/>
</dbReference>
<dbReference type="FunFam" id="3.40.50.10490:FF:000017">
    <property type="entry name" value="40S ribosomal protein SA"/>
    <property type="match status" value="1"/>
</dbReference>
<dbReference type="Gene3D" id="3.40.50.10490">
    <property type="entry name" value="Glucose-6-phosphate isomerase like protein, domain 1"/>
    <property type="match status" value="1"/>
</dbReference>
<dbReference type="HAMAP" id="MF_03015">
    <property type="entry name" value="Ribosomal_S2_euk"/>
    <property type="match status" value="1"/>
</dbReference>
<dbReference type="InterPro" id="IPR001865">
    <property type="entry name" value="Ribosomal_uS2"/>
</dbReference>
<dbReference type="InterPro" id="IPR018130">
    <property type="entry name" value="Ribosomal_uS2_CS"/>
</dbReference>
<dbReference type="InterPro" id="IPR027498">
    <property type="entry name" value="Ribosomal_uS2_euk"/>
</dbReference>
<dbReference type="InterPro" id="IPR005707">
    <property type="entry name" value="Ribosomal_uS2_euk/arc"/>
</dbReference>
<dbReference type="InterPro" id="IPR023591">
    <property type="entry name" value="Ribosomal_uS2_flav_dom_sf"/>
</dbReference>
<dbReference type="NCBIfam" id="TIGR01012">
    <property type="entry name" value="uS2_euk_arch"/>
    <property type="match status" value="1"/>
</dbReference>
<dbReference type="PANTHER" id="PTHR11489">
    <property type="entry name" value="40S RIBOSOMAL PROTEIN SA"/>
    <property type="match status" value="1"/>
</dbReference>
<dbReference type="Pfam" id="PF00318">
    <property type="entry name" value="Ribosomal_S2"/>
    <property type="match status" value="2"/>
</dbReference>
<dbReference type="PRINTS" id="PR00395">
    <property type="entry name" value="RIBOSOMALS2"/>
</dbReference>
<dbReference type="SUPFAM" id="SSF52313">
    <property type="entry name" value="Ribosomal protein S2"/>
    <property type="match status" value="1"/>
</dbReference>
<dbReference type="PROSITE" id="PS00963">
    <property type="entry name" value="RIBOSOMAL_S2_2"/>
    <property type="match status" value="1"/>
</dbReference>
<accession>Q8H173</accession>
<accession>Q8LB49</accession>
<accession>Q8S9I1</accession>
<accession>Q96317</accession>
<organism>
    <name type="scientific">Arabidopsis thaliana</name>
    <name type="common">Mouse-ear cress</name>
    <dbReference type="NCBI Taxonomy" id="3702"/>
    <lineage>
        <taxon>Eukaryota</taxon>
        <taxon>Viridiplantae</taxon>
        <taxon>Streptophyta</taxon>
        <taxon>Embryophyta</taxon>
        <taxon>Tracheophyta</taxon>
        <taxon>Spermatophyta</taxon>
        <taxon>Magnoliopsida</taxon>
        <taxon>eudicotyledons</taxon>
        <taxon>Gunneridae</taxon>
        <taxon>Pentapetalae</taxon>
        <taxon>rosids</taxon>
        <taxon>malvids</taxon>
        <taxon>Brassicales</taxon>
        <taxon>Brassicaceae</taxon>
        <taxon>Camelineae</taxon>
        <taxon>Arabidopsis</taxon>
    </lineage>
</organism>
<sequence>MAANGVATAGRQVSEKEADIQMMLSADVHLGTKNCNYQMERYVFKRRDDGIYIINLGKTWDKLQMAARVIVAIENPKDIIVQSARPYGQRAVLKFAQYTGVNAIAGRHTPGTFTNQMQTSFSEPRLLILTDPRTDHQPIKEGALGNIPTIAFCDTDSPMGFVDIGIPANNKGKHSIGCLFWLLARMVLQMRGTILAAQKWDVMVDLFFYREPEEAKQEGDEEAEVQADYGMVGGDQWTTAQISDAAWSGEVEQPISAAPAVGVTVAAGWEAASVPAAGWE</sequence>
<name>RSSA2_ARATH</name>
<feature type="initiator methionine" description="Removed" evidence="5">
    <location>
        <position position="1"/>
    </location>
</feature>
<feature type="chain" id="PRO_0000134347" description="Small ribosomal subunit protein uS2y">
    <location>
        <begin position="2"/>
        <end position="280"/>
    </location>
</feature>
<feature type="modified residue" description="N-acetylalanine" evidence="5">
    <location>
        <position position="2"/>
    </location>
</feature>
<feature type="splice variant" id="VSP_015273" description="In isoform 2." evidence="2">
    <original>DLFFYREPEEAKQEGDEEAEVQADYGMVGGDQWTTAQISDAAWSGEVEQPISAAPAVGVTVAAGWEAASVPAAGWE</original>
    <variation>NSRNTIRTCVSPTPDKDLDLFLLCRWICFSTGSPKKQSKRVMKKLKYRPIMEWLVVTSGPLLKYLMLHGLVKSNSQ</variation>
    <location>
        <begin position="205"/>
        <end position="280"/>
    </location>
</feature>
<feature type="sequence conflict" description="In Ref. 4; AAL77699/AAN18120." evidence="4" ref="4">
    <original>M</original>
    <variation>I</variation>
    <location>
        <position position="22"/>
    </location>
</feature>
<feature type="sequence conflict" description="In Ref. 5; AAM64971." evidence="4" ref="5">
    <original>Q</original>
    <variation>H</variation>
    <location>
        <position position="38"/>
    </location>
</feature>
<feature type="sequence conflict" description="In Ref. 4; AAL77699." evidence="4" ref="4">
    <original>S</original>
    <variation>F</variation>
    <location sequence="Q8H173-2">
        <position position="234"/>
    </location>
</feature>